<sequence length="478" mass="53364">MESSFEASKSLNENRDDIELIPTQSQGSPSLSSSSTITSTSRLGSNQVLIRIYFIDDTHKTLSIDPNNTTGDQLWEMVSEKLGINNRDSECFFVWAQNDEIEWLLFNHQNISEVIKNWGILKKRYCNTEENSPSSSTSSPILSGLSSIRGKKSNASSTSNANDGSGSGSGSGSGSGSGSGTSTPNSPKGGLSGFLTLGRKNKAQSPQLQSQSSSLSTTIASEHASKLRSSFPTLGEEGQFRLVYRPTSVLPLELERSINTAEATHLFYIQAIHNVINSNYPCEEDVALKLASIQLQVLVGDQKMEHQDHFKESISRYIPSHLLSKRKAEEWEQLVIPQHSLLRGSDSLQLKRAYLETCQRWAYYGSTFFKAKYIPANTSFFTQEFQGKVSIGINGNGFHIIDPKEMKMVSYSYRDIIAWDSTSNSFTIKFKIGQDKKFETKPYIFKTPQGELINDLISDWSEEWESKEKKNNKDSKKK</sequence>
<gene>
    <name type="primary">frmB</name>
    <name type="ORF">DDB_0190205</name>
    <name type="ORF">DDB_G0269362</name>
</gene>
<evidence type="ECO:0000255" key="1">
    <source>
        <dbReference type="PROSITE-ProRule" id="PRU00084"/>
    </source>
</evidence>
<evidence type="ECO:0000256" key="2">
    <source>
        <dbReference type="SAM" id="MobiDB-lite"/>
    </source>
</evidence>
<protein>
    <recommendedName>
        <fullName>FERM domain-containing protein B</fullName>
    </recommendedName>
</protein>
<accession>Q55E74</accession>
<feature type="chain" id="PRO_0000391332" description="FERM domain-containing protein B">
    <location>
        <begin position="1"/>
        <end position="478"/>
    </location>
</feature>
<feature type="domain" description="FERM" evidence="1">
    <location>
        <begin position="48"/>
        <end position="468"/>
    </location>
</feature>
<feature type="region of interest" description="Disordered" evidence="2">
    <location>
        <begin position="19"/>
        <end position="39"/>
    </location>
</feature>
<feature type="region of interest" description="Disordered" evidence="2">
    <location>
        <begin position="129"/>
        <end position="196"/>
    </location>
</feature>
<feature type="region of interest" description="Disordered" evidence="2">
    <location>
        <begin position="202"/>
        <end position="221"/>
    </location>
</feature>
<feature type="compositionally biased region" description="Low complexity" evidence="2">
    <location>
        <begin position="22"/>
        <end position="39"/>
    </location>
</feature>
<feature type="compositionally biased region" description="Low complexity" evidence="2">
    <location>
        <begin position="129"/>
        <end position="164"/>
    </location>
</feature>
<feature type="compositionally biased region" description="Gly residues" evidence="2">
    <location>
        <begin position="165"/>
        <end position="179"/>
    </location>
</feature>
<feature type="compositionally biased region" description="Low complexity" evidence="2">
    <location>
        <begin position="180"/>
        <end position="189"/>
    </location>
</feature>
<feature type="compositionally biased region" description="Low complexity" evidence="2">
    <location>
        <begin position="204"/>
        <end position="216"/>
    </location>
</feature>
<organism>
    <name type="scientific">Dictyostelium discoideum</name>
    <name type="common">Social amoeba</name>
    <dbReference type="NCBI Taxonomy" id="44689"/>
    <lineage>
        <taxon>Eukaryota</taxon>
        <taxon>Amoebozoa</taxon>
        <taxon>Evosea</taxon>
        <taxon>Eumycetozoa</taxon>
        <taxon>Dictyostelia</taxon>
        <taxon>Dictyosteliales</taxon>
        <taxon>Dictyosteliaceae</taxon>
        <taxon>Dictyostelium</taxon>
    </lineage>
</organism>
<dbReference type="EMBL" id="AAFI02000005">
    <property type="protein sequence ID" value="EAL72031.1"/>
    <property type="molecule type" value="Genomic_DNA"/>
</dbReference>
<dbReference type="RefSeq" id="XP_645907.1">
    <property type="nucleotide sequence ID" value="XM_640815.1"/>
</dbReference>
<dbReference type="SMR" id="Q55E74"/>
<dbReference type="FunCoup" id="Q55E74">
    <property type="interactions" value="69"/>
</dbReference>
<dbReference type="STRING" id="44689.Q55E74"/>
<dbReference type="PaxDb" id="44689-DDB0233516"/>
<dbReference type="EnsemblProtists" id="EAL72031">
    <property type="protein sequence ID" value="EAL72031"/>
    <property type="gene ID" value="DDB_G0269362"/>
</dbReference>
<dbReference type="GeneID" id="8616848"/>
<dbReference type="KEGG" id="ddi:DDB_G0269362"/>
<dbReference type="dictyBase" id="DDB_G0269362">
    <property type="gene designation" value="frmB"/>
</dbReference>
<dbReference type="VEuPathDB" id="AmoebaDB:DDB_G0269362"/>
<dbReference type="eggNOG" id="KOG4229">
    <property type="taxonomic scope" value="Eukaryota"/>
</dbReference>
<dbReference type="HOGENOM" id="CLU_571660_0_0_1"/>
<dbReference type="InParanoid" id="Q55E74"/>
<dbReference type="OMA" id="ECFFVWA"/>
<dbReference type="PRO" id="PR:Q55E74"/>
<dbReference type="Proteomes" id="UP000002195">
    <property type="component" value="Chromosome 1"/>
</dbReference>
<dbReference type="GO" id="GO:0005856">
    <property type="term" value="C:cytoskeleton"/>
    <property type="evidence" value="ECO:0007669"/>
    <property type="project" value="InterPro"/>
</dbReference>
<dbReference type="GO" id="GO:0005829">
    <property type="term" value="C:cytosol"/>
    <property type="evidence" value="ECO:0000304"/>
    <property type="project" value="dictyBase"/>
</dbReference>
<dbReference type="GO" id="GO:0005886">
    <property type="term" value="C:plasma membrane"/>
    <property type="evidence" value="ECO:0000318"/>
    <property type="project" value="GO_Central"/>
</dbReference>
<dbReference type="GO" id="GO:0010810">
    <property type="term" value="P:regulation of cell-substrate adhesion"/>
    <property type="evidence" value="ECO:0000315"/>
    <property type="project" value="dictyBase"/>
</dbReference>
<dbReference type="GO" id="GO:0031156">
    <property type="term" value="P:regulation of sorocarp development"/>
    <property type="evidence" value="ECO:0000315"/>
    <property type="project" value="dictyBase"/>
</dbReference>
<dbReference type="CDD" id="cd14473">
    <property type="entry name" value="FERM_B-lobe"/>
    <property type="match status" value="1"/>
</dbReference>
<dbReference type="Gene3D" id="1.20.80.10">
    <property type="match status" value="1"/>
</dbReference>
<dbReference type="Gene3D" id="3.10.20.90">
    <property type="entry name" value="Phosphatidylinositol 3-kinase Catalytic Subunit, Chain A, domain 1"/>
    <property type="match status" value="1"/>
</dbReference>
<dbReference type="Gene3D" id="2.30.29.30">
    <property type="entry name" value="Pleckstrin-homology domain (PH domain)/Phosphotyrosine-binding domain (PTB)"/>
    <property type="match status" value="1"/>
</dbReference>
<dbReference type="InterPro" id="IPR019749">
    <property type="entry name" value="Band_41_domain"/>
</dbReference>
<dbReference type="InterPro" id="IPR014352">
    <property type="entry name" value="FERM/acyl-CoA-bd_prot_sf"/>
</dbReference>
<dbReference type="InterPro" id="IPR035963">
    <property type="entry name" value="FERM_2"/>
</dbReference>
<dbReference type="InterPro" id="IPR019748">
    <property type="entry name" value="FERM_central"/>
</dbReference>
<dbReference type="InterPro" id="IPR000299">
    <property type="entry name" value="FERM_domain"/>
</dbReference>
<dbReference type="InterPro" id="IPR051594">
    <property type="entry name" value="KRIT1/FRMD8"/>
</dbReference>
<dbReference type="InterPro" id="IPR011993">
    <property type="entry name" value="PH-like_dom_sf"/>
</dbReference>
<dbReference type="InterPro" id="IPR029071">
    <property type="entry name" value="Ubiquitin-like_domsf"/>
</dbReference>
<dbReference type="PANTHER" id="PTHR13283:SF10">
    <property type="entry name" value="FERM DOMAIN-CONTAINING PROTEIN 8"/>
    <property type="match status" value="1"/>
</dbReference>
<dbReference type="PANTHER" id="PTHR13283">
    <property type="entry name" value="KREV INTERACTION TRAPPED 1-RELATED"/>
    <property type="match status" value="1"/>
</dbReference>
<dbReference type="Pfam" id="PF00373">
    <property type="entry name" value="FERM_M"/>
    <property type="match status" value="1"/>
</dbReference>
<dbReference type="Pfam" id="PF24522">
    <property type="entry name" value="KRIT1_FRMD8_FERM_C"/>
    <property type="match status" value="1"/>
</dbReference>
<dbReference type="Pfam" id="PF21989">
    <property type="entry name" value="RA_2"/>
    <property type="match status" value="1"/>
</dbReference>
<dbReference type="SMART" id="SM00295">
    <property type="entry name" value="B41"/>
    <property type="match status" value="1"/>
</dbReference>
<dbReference type="SUPFAM" id="SSF50729">
    <property type="entry name" value="PH domain-like"/>
    <property type="match status" value="1"/>
</dbReference>
<dbReference type="SUPFAM" id="SSF47031">
    <property type="entry name" value="Second domain of FERM"/>
    <property type="match status" value="1"/>
</dbReference>
<dbReference type="SUPFAM" id="SSF54236">
    <property type="entry name" value="Ubiquitin-like"/>
    <property type="match status" value="1"/>
</dbReference>
<dbReference type="PROSITE" id="PS50057">
    <property type="entry name" value="FERM_3"/>
    <property type="match status" value="1"/>
</dbReference>
<reference key="1">
    <citation type="journal article" date="2005" name="Nature">
        <title>The genome of the social amoeba Dictyostelium discoideum.</title>
        <authorList>
            <person name="Eichinger L."/>
            <person name="Pachebat J.A."/>
            <person name="Gloeckner G."/>
            <person name="Rajandream M.A."/>
            <person name="Sucgang R."/>
            <person name="Berriman M."/>
            <person name="Song J."/>
            <person name="Olsen R."/>
            <person name="Szafranski K."/>
            <person name="Xu Q."/>
            <person name="Tunggal B."/>
            <person name="Kummerfeld S."/>
            <person name="Madera M."/>
            <person name="Konfortov B.A."/>
            <person name="Rivero F."/>
            <person name="Bankier A.T."/>
            <person name="Lehmann R."/>
            <person name="Hamlin N."/>
            <person name="Davies R."/>
            <person name="Gaudet P."/>
            <person name="Fey P."/>
            <person name="Pilcher K."/>
            <person name="Chen G."/>
            <person name="Saunders D."/>
            <person name="Sodergren E.J."/>
            <person name="Davis P."/>
            <person name="Kerhornou A."/>
            <person name="Nie X."/>
            <person name="Hall N."/>
            <person name="Anjard C."/>
            <person name="Hemphill L."/>
            <person name="Bason N."/>
            <person name="Farbrother P."/>
            <person name="Desany B."/>
            <person name="Just E."/>
            <person name="Morio T."/>
            <person name="Rost R."/>
            <person name="Churcher C.M."/>
            <person name="Cooper J."/>
            <person name="Haydock S."/>
            <person name="van Driessche N."/>
            <person name="Cronin A."/>
            <person name="Goodhead I."/>
            <person name="Muzny D.M."/>
            <person name="Mourier T."/>
            <person name="Pain A."/>
            <person name="Lu M."/>
            <person name="Harper D."/>
            <person name="Lindsay R."/>
            <person name="Hauser H."/>
            <person name="James K.D."/>
            <person name="Quiles M."/>
            <person name="Madan Babu M."/>
            <person name="Saito T."/>
            <person name="Buchrieser C."/>
            <person name="Wardroper A."/>
            <person name="Felder M."/>
            <person name="Thangavelu M."/>
            <person name="Johnson D."/>
            <person name="Knights A."/>
            <person name="Loulseged H."/>
            <person name="Mungall K.L."/>
            <person name="Oliver K."/>
            <person name="Price C."/>
            <person name="Quail M.A."/>
            <person name="Urushihara H."/>
            <person name="Hernandez J."/>
            <person name="Rabbinowitsch E."/>
            <person name="Steffen D."/>
            <person name="Sanders M."/>
            <person name="Ma J."/>
            <person name="Kohara Y."/>
            <person name="Sharp S."/>
            <person name="Simmonds M.N."/>
            <person name="Spiegler S."/>
            <person name="Tivey A."/>
            <person name="Sugano S."/>
            <person name="White B."/>
            <person name="Walker D."/>
            <person name="Woodward J.R."/>
            <person name="Winckler T."/>
            <person name="Tanaka Y."/>
            <person name="Shaulsky G."/>
            <person name="Schleicher M."/>
            <person name="Weinstock G.M."/>
            <person name="Rosenthal A."/>
            <person name="Cox E.C."/>
            <person name="Chisholm R.L."/>
            <person name="Gibbs R.A."/>
            <person name="Loomis W.F."/>
            <person name="Platzer M."/>
            <person name="Kay R.R."/>
            <person name="Williams J.G."/>
            <person name="Dear P.H."/>
            <person name="Noegel A.A."/>
            <person name="Barrell B.G."/>
            <person name="Kuspa A."/>
        </authorList>
    </citation>
    <scope>NUCLEOTIDE SEQUENCE [LARGE SCALE GENOMIC DNA]</scope>
    <source>
        <strain>AX4</strain>
    </source>
</reference>
<name>FRMB_DICDI</name>
<keyword id="KW-1185">Reference proteome</keyword>
<proteinExistence type="predicted"/>